<accession>Q6G7K4</accession>
<name>ATPD_STAAS</name>
<protein>
    <recommendedName>
        <fullName evidence="1">ATP synthase subunit delta</fullName>
    </recommendedName>
    <alternativeName>
        <fullName evidence="1">ATP synthase F(1) sector subunit delta</fullName>
    </alternativeName>
    <alternativeName>
        <fullName evidence="1">F-type ATPase subunit delta</fullName>
        <shortName evidence="1">F-ATPase subunit delta</shortName>
    </alternativeName>
</protein>
<sequence>MVKVANKYAKALFDVSLDTNNLETINEELTVINEAVKDKIEQLKMVDSNPTQTAEQRRELINGVFTDINPYIKNMMYVLADNRHISLIADVFKAFQSLYNGHYNQDFATIESTYELSQEELDKIVKLVTQQTKLSKVIVDTKINPDLIGGFRVKVGTTVLDGSVRNDLVQLQRKFRRVN</sequence>
<reference key="1">
    <citation type="journal article" date="2004" name="Proc. Natl. Acad. Sci. U.S.A.">
        <title>Complete genomes of two clinical Staphylococcus aureus strains: evidence for the rapid evolution of virulence and drug resistance.</title>
        <authorList>
            <person name="Holden M.T.G."/>
            <person name="Feil E.J."/>
            <person name="Lindsay J.A."/>
            <person name="Peacock S.J."/>
            <person name="Day N.P.J."/>
            <person name="Enright M.C."/>
            <person name="Foster T.J."/>
            <person name="Moore C.E."/>
            <person name="Hurst L."/>
            <person name="Atkin R."/>
            <person name="Barron A."/>
            <person name="Bason N."/>
            <person name="Bentley S.D."/>
            <person name="Chillingworth C."/>
            <person name="Chillingworth T."/>
            <person name="Churcher C."/>
            <person name="Clark L."/>
            <person name="Corton C."/>
            <person name="Cronin A."/>
            <person name="Doggett J."/>
            <person name="Dowd L."/>
            <person name="Feltwell T."/>
            <person name="Hance Z."/>
            <person name="Harris B."/>
            <person name="Hauser H."/>
            <person name="Holroyd S."/>
            <person name="Jagels K."/>
            <person name="James K.D."/>
            <person name="Lennard N."/>
            <person name="Line A."/>
            <person name="Mayes R."/>
            <person name="Moule S."/>
            <person name="Mungall K."/>
            <person name="Ormond D."/>
            <person name="Quail M.A."/>
            <person name="Rabbinowitsch E."/>
            <person name="Rutherford K.M."/>
            <person name="Sanders M."/>
            <person name="Sharp S."/>
            <person name="Simmonds M."/>
            <person name="Stevens K."/>
            <person name="Whitehead S."/>
            <person name="Barrell B.G."/>
            <person name="Spratt B.G."/>
            <person name="Parkhill J."/>
        </authorList>
    </citation>
    <scope>NUCLEOTIDE SEQUENCE [LARGE SCALE GENOMIC DNA]</scope>
    <source>
        <strain>MSSA476</strain>
    </source>
</reference>
<organism>
    <name type="scientific">Staphylococcus aureus (strain MSSA476)</name>
    <dbReference type="NCBI Taxonomy" id="282459"/>
    <lineage>
        <taxon>Bacteria</taxon>
        <taxon>Bacillati</taxon>
        <taxon>Bacillota</taxon>
        <taxon>Bacilli</taxon>
        <taxon>Bacillales</taxon>
        <taxon>Staphylococcaceae</taxon>
        <taxon>Staphylococcus</taxon>
    </lineage>
</organism>
<gene>
    <name evidence="1" type="primary">atpH</name>
    <name type="ordered locus">SAS2009</name>
</gene>
<feature type="chain" id="PRO_0000193484" description="ATP synthase subunit delta">
    <location>
        <begin position="1"/>
        <end position="179"/>
    </location>
</feature>
<comment type="function">
    <text evidence="1">F(1)F(0) ATP synthase produces ATP from ADP in the presence of a proton or sodium gradient. F-type ATPases consist of two structural domains, F(1) containing the extramembraneous catalytic core and F(0) containing the membrane proton channel, linked together by a central stalk and a peripheral stalk. During catalysis, ATP synthesis in the catalytic domain of F(1) is coupled via a rotary mechanism of the central stalk subunits to proton translocation.</text>
</comment>
<comment type="function">
    <text evidence="1">This protein is part of the stalk that links CF(0) to CF(1). It either transmits conformational changes from CF(0) to CF(1) or is implicated in proton conduction.</text>
</comment>
<comment type="subunit">
    <text evidence="1">F-type ATPases have 2 components, F(1) - the catalytic core - and F(0) - the membrane proton channel. F(1) has five subunits: alpha(3), beta(3), gamma(1), delta(1), epsilon(1). F(0) has three main subunits: a(1), b(2) and c(10-14). The alpha and beta chains form an alternating ring which encloses part of the gamma chain. F(1) is attached to F(0) by a central stalk formed by the gamma and epsilon chains, while a peripheral stalk is formed by the delta and b chains.</text>
</comment>
<comment type="subcellular location">
    <subcellularLocation>
        <location evidence="1">Cell membrane</location>
        <topology evidence="1">Peripheral membrane protein</topology>
    </subcellularLocation>
</comment>
<comment type="similarity">
    <text evidence="1">Belongs to the ATPase delta chain family.</text>
</comment>
<dbReference type="EMBL" id="BX571857">
    <property type="protein sequence ID" value="CAG43817.1"/>
    <property type="molecule type" value="Genomic_DNA"/>
</dbReference>
<dbReference type="RefSeq" id="WP_000241344.1">
    <property type="nucleotide sequence ID" value="NC_002953.3"/>
</dbReference>
<dbReference type="SMR" id="Q6G7K4"/>
<dbReference type="KEGG" id="sas:SAS2009"/>
<dbReference type="HOGENOM" id="CLU_085114_4_1_9"/>
<dbReference type="GO" id="GO:0005886">
    <property type="term" value="C:plasma membrane"/>
    <property type="evidence" value="ECO:0007669"/>
    <property type="project" value="UniProtKB-SubCell"/>
</dbReference>
<dbReference type="GO" id="GO:0045259">
    <property type="term" value="C:proton-transporting ATP synthase complex"/>
    <property type="evidence" value="ECO:0007669"/>
    <property type="project" value="UniProtKB-KW"/>
</dbReference>
<dbReference type="GO" id="GO:0046933">
    <property type="term" value="F:proton-transporting ATP synthase activity, rotational mechanism"/>
    <property type="evidence" value="ECO:0007669"/>
    <property type="project" value="UniProtKB-UniRule"/>
</dbReference>
<dbReference type="Gene3D" id="1.10.520.20">
    <property type="entry name" value="N-terminal domain of the delta subunit of the F1F0-ATP synthase"/>
    <property type="match status" value="1"/>
</dbReference>
<dbReference type="HAMAP" id="MF_01416">
    <property type="entry name" value="ATP_synth_delta_bact"/>
    <property type="match status" value="1"/>
</dbReference>
<dbReference type="InterPro" id="IPR026015">
    <property type="entry name" value="ATP_synth_OSCP/delta_N_sf"/>
</dbReference>
<dbReference type="InterPro" id="IPR020781">
    <property type="entry name" value="ATPase_OSCP/d_CS"/>
</dbReference>
<dbReference type="InterPro" id="IPR000711">
    <property type="entry name" value="ATPase_OSCP/dsu"/>
</dbReference>
<dbReference type="NCBIfam" id="TIGR01145">
    <property type="entry name" value="ATP_synt_delta"/>
    <property type="match status" value="1"/>
</dbReference>
<dbReference type="NCBIfam" id="NF004399">
    <property type="entry name" value="PRK05758.1-1"/>
    <property type="match status" value="1"/>
</dbReference>
<dbReference type="PANTHER" id="PTHR11910">
    <property type="entry name" value="ATP SYNTHASE DELTA CHAIN"/>
    <property type="match status" value="1"/>
</dbReference>
<dbReference type="Pfam" id="PF00213">
    <property type="entry name" value="OSCP"/>
    <property type="match status" value="1"/>
</dbReference>
<dbReference type="PRINTS" id="PR00125">
    <property type="entry name" value="ATPASEDELTA"/>
</dbReference>
<dbReference type="SUPFAM" id="SSF47928">
    <property type="entry name" value="N-terminal domain of the delta subunit of the F1F0-ATP synthase"/>
    <property type="match status" value="1"/>
</dbReference>
<dbReference type="PROSITE" id="PS00389">
    <property type="entry name" value="ATPASE_DELTA"/>
    <property type="match status" value="1"/>
</dbReference>
<keyword id="KW-0066">ATP synthesis</keyword>
<keyword id="KW-1003">Cell membrane</keyword>
<keyword id="KW-0139">CF(1)</keyword>
<keyword id="KW-0375">Hydrogen ion transport</keyword>
<keyword id="KW-0406">Ion transport</keyword>
<keyword id="KW-0472">Membrane</keyword>
<keyword id="KW-0813">Transport</keyword>
<proteinExistence type="inferred from homology"/>
<evidence type="ECO:0000255" key="1">
    <source>
        <dbReference type="HAMAP-Rule" id="MF_01416"/>
    </source>
</evidence>